<accession>A1SVX3</accession>
<proteinExistence type="inferred from homology"/>
<sequence>MSKFYKSGRVTTAVIVALSLSACARFDARTQANGDFDYVQTPRGEHYQTAHFTQNEARDIYDIPALTEQQKRIGFLSSNVDIRPPTQLIPVIDGVVLEANNSDKTTVLFNAFNHTENMKDKVWTLLESYIAANNIEVAAKDSNLTQIETGMFRHQQAYGSFLFRTKVVRESSYRFTLNQPQGGQNAALTVEVLSYSEKNDNVDLKVNLTARSKKSIELRLVNDLLKYAYQLKESSELQVANSQPLPIKLGYDDNNQMVWIVDADFIVSWTKLPDLLALLRFEQVDADKNLGYYLVKFKAPNAKYWPENNLNSFELDNAEYFIQLGELNSGSTSITWLDADKKPLADEKVTEIYFSITSKIRDVLLLNENQSKAL</sequence>
<comment type="function">
    <text evidence="1">Part of the outer membrane protein assembly complex, which is involved in assembly and insertion of beta-barrel proteins into the outer membrane.</text>
</comment>
<comment type="subunit">
    <text evidence="1">Part of the Bam complex.</text>
</comment>
<comment type="subcellular location">
    <subcellularLocation>
        <location evidence="1">Cell outer membrane</location>
        <topology evidence="1">Lipid-anchor</topology>
    </subcellularLocation>
</comment>
<comment type="similarity">
    <text evidence="1">Belongs to the BamC family.</text>
</comment>
<keyword id="KW-0998">Cell outer membrane</keyword>
<keyword id="KW-0449">Lipoprotein</keyword>
<keyword id="KW-0472">Membrane</keyword>
<keyword id="KW-0564">Palmitate</keyword>
<keyword id="KW-1185">Reference proteome</keyword>
<keyword id="KW-0732">Signal</keyword>
<reference key="1">
    <citation type="journal article" date="2008" name="BMC Genomics">
        <title>Genomics of an extreme psychrophile, Psychromonas ingrahamii.</title>
        <authorList>
            <person name="Riley M."/>
            <person name="Staley J.T."/>
            <person name="Danchin A."/>
            <person name="Wang T.Z."/>
            <person name="Brettin T.S."/>
            <person name="Hauser L.J."/>
            <person name="Land M.L."/>
            <person name="Thompson L.S."/>
        </authorList>
    </citation>
    <scope>NUCLEOTIDE SEQUENCE [LARGE SCALE GENOMIC DNA]</scope>
    <source>
        <strain>DSM 17664 / CCUG 51855 / 37</strain>
    </source>
</reference>
<dbReference type="EMBL" id="CP000510">
    <property type="protein sequence ID" value="ABM03638.1"/>
    <property type="molecule type" value="Genomic_DNA"/>
</dbReference>
<dbReference type="RefSeq" id="WP_011770198.1">
    <property type="nucleotide sequence ID" value="NC_008709.1"/>
</dbReference>
<dbReference type="STRING" id="357804.Ping_1861"/>
<dbReference type="KEGG" id="pin:Ping_1861"/>
<dbReference type="eggNOG" id="COG3317">
    <property type="taxonomic scope" value="Bacteria"/>
</dbReference>
<dbReference type="HOGENOM" id="CLU_063217_1_0_6"/>
<dbReference type="OrthoDB" id="5598420at2"/>
<dbReference type="Proteomes" id="UP000000639">
    <property type="component" value="Chromosome"/>
</dbReference>
<dbReference type="GO" id="GO:0009279">
    <property type="term" value="C:cell outer membrane"/>
    <property type="evidence" value="ECO:0007669"/>
    <property type="project" value="UniProtKB-SubCell"/>
</dbReference>
<dbReference type="GO" id="GO:0043165">
    <property type="term" value="P:Gram-negative-bacterium-type cell outer membrane assembly"/>
    <property type="evidence" value="ECO:0007669"/>
    <property type="project" value="UniProtKB-UniRule"/>
</dbReference>
<dbReference type="GO" id="GO:0051205">
    <property type="term" value="P:protein insertion into membrane"/>
    <property type="evidence" value="ECO:0007669"/>
    <property type="project" value="UniProtKB-UniRule"/>
</dbReference>
<dbReference type="Gene3D" id="3.30.530.50">
    <property type="match status" value="1"/>
</dbReference>
<dbReference type="Gene3D" id="3.30.310.170">
    <property type="entry name" value="Outer membrane protein assembly factor BamC"/>
    <property type="match status" value="1"/>
</dbReference>
<dbReference type="HAMAP" id="MF_00924">
    <property type="entry name" value="OM_assembly_BamC"/>
    <property type="match status" value="1"/>
</dbReference>
<dbReference type="InterPro" id="IPR014524">
    <property type="entry name" value="BamC"/>
</dbReference>
<dbReference type="InterPro" id="IPR042268">
    <property type="entry name" value="BamC_C"/>
</dbReference>
<dbReference type="InterPro" id="IPR010653">
    <property type="entry name" value="NlpB/DapX"/>
</dbReference>
<dbReference type="Pfam" id="PF06804">
    <property type="entry name" value="Lipoprotein_18"/>
    <property type="match status" value="1"/>
</dbReference>
<dbReference type="PROSITE" id="PS51257">
    <property type="entry name" value="PROKAR_LIPOPROTEIN"/>
    <property type="match status" value="1"/>
</dbReference>
<name>BAMC_PSYIN</name>
<gene>
    <name evidence="1" type="primary">bamC</name>
    <name type="ordered locus">Ping_1861</name>
</gene>
<evidence type="ECO:0000255" key="1">
    <source>
        <dbReference type="HAMAP-Rule" id="MF_00924"/>
    </source>
</evidence>
<feature type="signal peptide" evidence="1">
    <location>
        <begin position="1"/>
        <end position="22"/>
    </location>
</feature>
<feature type="chain" id="PRO_5000206726" description="Outer membrane protein assembly factor BamC">
    <location>
        <begin position="23"/>
        <end position="374"/>
    </location>
</feature>
<feature type="lipid moiety-binding region" description="N-palmitoyl cysteine" evidence="1">
    <location>
        <position position="23"/>
    </location>
</feature>
<feature type="lipid moiety-binding region" description="S-diacylglycerol cysteine" evidence="1">
    <location>
        <position position="23"/>
    </location>
</feature>
<organism>
    <name type="scientific">Psychromonas ingrahamii (strain DSM 17664 / CCUG 51855 / 37)</name>
    <dbReference type="NCBI Taxonomy" id="357804"/>
    <lineage>
        <taxon>Bacteria</taxon>
        <taxon>Pseudomonadati</taxon>
        <taxon>Pseudomonadota</taxon>
        <taxon>Gammaproteobacteria</taxon>
        <taxon>Alteromonadales</taxon>
        <taxon>Psychromonadaceae</taxon>
        <taxon>Psychromonas</taxon>
    </lineage>
</organism>
<protein>
    <recommendedName>
        <fullName evidence="1">Outer membrane protein assembly factor BamC</fullName>
    </recommendedName>
</protein>